<keyword id="KW-0274">FAD</keyword>
<keyword id="KW-0285">Flavoprotein</keyword>
<keyword id="KW-0472">Membrane</keyword>
<keyword id="KW-0496">Mitochondrion</keyword>
<keyword id="KW-1000">Mitochondrion outer membrane</keyword>
<keyword id="KW-0503">Monooxygenase</keyword>
<keyword id="KW-0521">NADP</keyword>
<keyword id="KW-0560">Oxidoreductase</keyword>
<keyword id="KW-0662">Pyridine nucleotide biosynthesis</keyword>
<keyword id="KW-1185">Reference proteome</keyword>
<name>KMO_CANAL</name>
<dbReference type="EC" id="1.14.13.9" evidence="1"/>
<dbReference type="EMBL" id="CP017625">
    <property type="protein sequence ID" value="AOW28076.1"/>
    <property type="molecule type" value="Genomic_DNA"/>
</dbReference>
<dbReference type="RefSeq" id="XP_717815.1">
    <property type="nucleotide sequence ID" value="XM_712722.1"/>
</dbReference>
<dbReference type="SMR" id="Q5A7M3"/>
<dbReference type="FunCoup" id="Q5A7M3">
    <property type="interactions" value="801"/>
</dbReference>
<dbReference type="STRING" id="237561.Q5A7M3"/>
<dbReference type="EnsemblFungi" id="C3_00260C_A-T">
    <property type="protein sequence ID" value="C3_00260C_A-T-p1"/>
    <property type="gene ID" value="C3_00260C_A"/>
</dbReference>
<dbReference type="GeneID" id="3640528"/>
<dbReference type="KEGG" id="cal:CAALFM_C300260CA"/>
<dbReference type="CGD" id="CAL0000200704">
    <property type="gene designation" value="BNA4"/>
</dbReference>
<dbReference type="VEuPathDB" id="FungiDB:C3_00260C_A"/>
<dbReference type="eggNOG" id="KOG2614">
    <property type="taxonomic scope" value="Eukaryota"/>
</dbReference>
<dbReference type="HOGENOM" id="CLU_023210_0_1_1"/>
<dbReference type="InParanoid" id="Q5A7M3"/>
<dbReference type="OMA" id="REFMFIA"/>
<dbReference type="OrthoDB" id="10053569at2759"/>
<dbReference type="UniPathway" id="UPA00253">
    <property type="reaction ID" value="UER00328"/>
</dbReference>
<dbReference type="PRO" id="PR:Q5A7M3"/>
<dbReference type="Proteomes" id="UP000000559">
    <property type="component" value="Chromosome 3"/>
</dbReference>
<dbReference type="GO" id="GO:0005741">
    <property type="term" value="C:mitochondrial outer membrane"/>
    <property type="evidence" value="ECO:0000318"/>
    <property type="project" value="GO_Central"/>
</dbReference>
<dbReference type="GO" id="GO:0005777">
    <property type="term" value="C:peroxisome"/>
    <property type="evidence" value="ECO:0007669"/>
    <property type="project" value="EnsemblFungi"/>
</dbReference>
<dbReference type="GO" id="GO:0005886">
    <property type="term" value="C:plasma membrane"/>
    <property type="evidence" value="ECO:0000314"/>
    <property type="project" value="CGD"/>
</dbReference>
<dbReference type="GO" id="GO:0071949">
    <property type="term" value="F:FAD binding"/>
    <property type="evidence" value="ECO:0007669"/>
    <property type="project" value="EnsemblFungi"/>
</dbReference>
<dbReference type="GO" id="GO:0004502">
    <property type="term" value="F:kynurenine 3-monooxygenase activity"/>
    <property type="evidence" value="ECO:0000247"/>
    <property type="project" value="CGD"/>
</dbReference>
<dbReference type="GO" id="GO:0016174">
    <property type="term" value="F:NAD(P)H oxidase H2O2-forming activity"/>
    <property type="evidence" value="ECO:0007669"/>
    <property type="project" value="EnsemblFungi"/>
</dbReference>
<dbReference type="GO" id="GO:0034354">
    <property type="term" value="P:'de novo' NAD biosynthetic process from L-tryptophan"/>
    <property type="evidence" value="ECO:0000247"/>
    <property type="project" value="CGD"/>
</dbReference>
<dbReference type="GO" id="GO:0043420">
    <property type="term" value="P:anthranilate metabolic process"/>
    <property type="evidence" value="ECO:0007669"/>
    <property type="project" value="UniProtKB-UniRule"/>
</dbReference>
<dbReference type="GO" id="GO:0009267">
    <property type="term" value="P:cellular response to starvation"/>
    <property type="evidence" value="ECO:0000315"/>
    <property type="project" value="CGD"/>
</dbReference>
<dbReference type="GO" id="GO:0030447">
    <property type="term" value="P:filamentous growth"/>
    <property type="evidence" value="ECO:0000315"/>
    <property type="project" value="CGD"/>
</dbReference>
<dbReference type="GO" id="GO:0036180">
    <property type="term" value="P:filamentous growth of a population of unicellular organisms in response to biotic stimulus"/>
    <property type="evidence" value="ECO:0000315"/>
    <property type="project" value="CGD"/>
</dbReference>
<dbReference type="GO" id="GO:0036170">
    <property type="term" value="P:filamentous growth of a population of unicellular organisms in response to starvation"/>
    <property type="evidence" value="ECO:0000315"/>
    <property type="project" value="CGD"/>
</dbReference>
<dbReference type="GO" id="GO:0070189">
    <property type="term" value="P:kynurenine metabolic process"/>
    <property type="evidence" value="ECO:0000318"/>
    <property type="project" value="GO_Central"/>
</dbReference>
<dbReference type="GO" id="GO:0006569">
    <property type="term" value="P:L-tryptophan catabolic process"/>
    <property type="evidence" value="ECO:0007669"/>
    <property type="project" value="UniProtKB-UniRule"/>
</dbReference>
<dbReference type="GO" id="GO:0019805">
    <property type="term" value="P:quinolinate biosynthetic process"/>
    <property type="evidence" value="ECO:0007669"/>
    <property type="project" value="UniProtKB-UniRule"/>
</dbReference>
<dbReference type="FunFam" id="3.50.50.60:FF:000129">
    <property type="entry name" value="Kynurenine 3-monooxygenase"/>
    <property type="match status" value="1"/>
</dbReference>
<dbReference type="Gene3D" id="3.50.50.60">
    <property type="entry name" value="FAD/NAD(P)-binding domain"/>
    <property type="match status" value="1"/>
</dbReference>
<dbReference type="HAMAP" id="MF_01971">
    <property type="entry name" value="Kynurenine_monooxygenase"/>
    <property type="match status" value="1"/>
</dbReference>
<dbReference type="InterPro" id="IPR002938">
    <property type="entry name" value="FAD-bd"/>
</dbReference>
<dbReference type="InterPro" id="IPR036188">
    <property type="entry name" value="FAD/NAD-bd_sf"/>
</dbReference>
<dbReference type="InterPro" id="IPR027545">
    <property type="entry name" value="Kynurenine_monooxygenase"/>
</dbReference>
<dbReference type="PANTHER" id="PTHR46028">
    <property type="entry name" value="KYNURENINE 3-MONOOXYGENASE"/>
    <property type="match status" value="1"/>
</dbReference>
<dbReference type="PANTHER" id="PTHR46028:SF2">
    <property type="entry name" value="KYNURENINE 3-MONOOXYGENASE"/>
    <property type="match status" value="1"/>
</dbReference>
<dbReference type="Pfam" id="PF01494">
    <property type="entry name" value="FAD_binding_3"/>
    <property type="match status" value="1"/>
</dbReference>
<dbReference type="PRINTS" id="PR00420">
    <property type="entry name" value="RNGMNOXGNASE"/>
</dbReference>
<dbReference type="SUPFAM" id="SSF51905">
    <property type="entry name" value="FAD/NAD(P)-binding domain"/>
    <property type="match status" value="1"/>
</dbReference>
<gene>
    <name evidence="1" type="primary">BNA4</name>
    <name type="ordered locus">CAALFM_C300260CA</name>
    <name type="ORF">CaO19.12898</name>
    <name type="ORF">CaO19.5443</name>
</gene>
<comment type="function">
    <text evidence="1">Catalyzes the hydroxylation of L-kynurenine (L-Kyn) to form 3-hydroxy-L-kynurenine (L-3OHKyn). Required for synthesis of quinolinic acid.</text>
</comment>
<comment type="catalytic activity">
    <reaction evidence="1">
        <text>L-kynurenine + NADPH + O2 + H(+) = 3-hydroxy-L-kynurenine + NADP(+) + H2O</text>
        <dbReference type="Rhea" id="RHEA:20545"/>
        <dbReference type="ChEBI" id="CHEBI:15377"/>
        <dbReference type="ChEBI" id="CHEBI:15378"/>
        <dbReference type="ChEBI" id="CHEBI:15379"/>
        <dbReference type="ChEBI" id="CHEBI:57783"/>
        <dbReference type="ChEBI" id="CHEBI:57959"/>
        <dbReference type="ChEBI" id="CHEBI:58125"/>
        <dbReference type="ChEBI" id="CHEBI:58349"/>
        <dbReference type="EC" id="1.14.13.9"/>
    </reaction>
</comment>
<comment type="cofactor">
    <cofactor evidence="1">
        <name>FAD</name>
        <dbReference type="ChEBI" id="CHEBI:57692"/>
    </cofactor>
</comment>
<comment type="pathway">
    <text evidence="1">Cofactor biosynthesis; NAD(+) biosynthesis; quinolinate from L-kynurenine: step 1/3.</text>
</comment>
<comment type="subcellular location">
    <subcellularLocation>
        <location evidence="1">Mitochondrion outer membrane</location>
    </subcellularLocation>
</comment>
<comment type="similarity">
    <text evidence="1">Belongs to the aromatic-ring hydroxylase family. KMO subfamily.</text>
</comment>
<reference key="1">
    <citation type="journal article" date="2004" name="Proc. Natl. Acad. Sci. U.S.A.">
        <title>The diploid genome sequence of Candida albicans.</title>
        <authorList>
            <person name="Jones T."/>
            <person name="Federspiel N.A."/>
            <person name="Chibana H."/>
            <person name="Dungan J."/>
            <person name="Kalman S."/>
            <person name="Magee B.B."/>
            <person name="Newport G."/>
            <person name="Thorstenson Y.R."/>
            <person name="Agabian N."/>
            <person name="Magee P.T."/>
            <person name="Davis R.W."/>
            <person name="Scherer S."/>
        </authorList>
    </citation>
    <scope>NUCLEOTIDE SEQUENCE [LARGE SCALE GENOMIC DNA]</scope>
    <source>
        <strain>SC5314 / ATCC MYA-2876</strain>
    </source>
</reference>
<reference key="2">
    <citation type="journal article" date="2007" name="Genome Biol.">
        <title>Assembly of the Candida albicans genome into sixteen supercontigs aligned on the eight chromosomes.</title>
        <authorList>
            <person name="van het Hoog M."/>
            <person name="Rast T.J."/>
            <person name="Martchenko M."/>
            <person name="Grindle S."/>
            <person name="Dignard D."/>
            <person name="Hogues H."/>
            <person name="Cuomo C."/>
            <person name="Berriman M."/>
            <person name="Scherer S."/>
            <person name="Magee B.B."/>
            <person name="Whiteway M."/>
            <person name="Chibana H."/>
            <person name="Nantel A."/>
            <person name="Magee P.T."/>
        </authorList>
    </citation>
    <scope>GENOME REANNOTATION</scope>
    <source>
        <strain>SC5314 / ATCC MYA-2876</strain>
    </source>
</reference>
<reference key="3">
    <citation type="journal article" date="2013" name="Genome Biol.">
        <title>Assembly of a phased diploid Candida albicans genome facilitates allele-specific measurements and provides a simple model for repeat and indel structure.</title>
        <authorList>
            <person name="Muzzey D."/>
            <person name="Schwartz K."/>
            <person name="Weissman J.S."/>
            <person name="Sherlock G."/>
        </authorList>
    </citation>
    <scope>NUCLEOTIDE SEQUENCE [LARGE SCALE GENOMIC DNA]</scope>
    <scope>GENOME REANNOTATION</scope>
    <source>
        <strain>SC5314 / ATCC MYA-2876</strain>
    </source>
</reference>
<proteinExistence type="inferred from homology"/>
<accession>Q5A7M3</accession>
<accession>A0A1D8PIW2</accession>
<evidence type="ECO:0000255" key="1">
    <source>
        <dbReference type="HAMAP-Rule" id="MF_03018"/>
    </source>
</evidence>
<sequence length="456" mass="51534">MSEEESQKTIGIVGAGLVGCLAALAFAKKGYDVTLFEYRPDPRTVDSSKRNLRSINLAVSSRGIRALQYVDPAMADRILEHVIPMKGRMIHDITGTKQESQVYGLNGESINSIDRSFLNNCLLDELDKSNVKILFKHKLVKLDTSNACRMTFIDGHNDAKTSTFDFVVGCDGAHSQFRYHLQKTMRMDYSQKYIDMQYLELYIPPSEDANNKFSIDANHLHIWPRHNFMLIALANKDGSFTSTFFSPWSVIEGISSSQEFVEFFRHNFPDAVGLIGEDALSSAFKSNPRGSLMQVSCYPYSNGKGIILGDAAHSMVPFYGQGMNCGFEDVRILMELIDTNNGDIEEAFKQYSAARKNDLDAICKLALDNYYEMSSKVVDIGYLIKKKLDYTLGKIFKNKWLPLYTMISFRDDIPYAKAIEIEKRQNRIMNNVGLGVLGTAAVYGLVKLGQYWNRRQ</sequence>
<feature type="chain" id="PRO_0000361924" description="Kynurenine 3-monooxygenase">
    <location>
        <begin position="1"/>
        <end position="456"/>
    </location>
</feature>
<protein>
    <recommendedName>
        <fullName evidence="1">Kynurenine 3-monooxygenase</fullName>
        <ecNumber evidence="1">1.14.13.9</ecNumber>
    </recommendedName>
    <alternativeName>
        <fullName evidence="1">Biosynthesis of nicotinic acid protein 4</fullName>
    </alternativeName>
    <alternativeName>
        <fullName evidence="1">Kynurenine 3-hydroxylase</fullName>
    </alternativeName>
</protein>
<organism>
    <name type="scientific">Candida albicans (strain SC5314 / ATCC MYA-2876)</name>
    <name type="common">Yeast</name>
    <dbReference type="NCBI Taxonomy" id="237561"/>
    <lineage>
        <taxon>Eukaryota</taxon>
        <taxon>Fungi</taxon>
        <taxon>Dikarya</taxon>
        <taxon>Ascomycota</taxon>
        <taxon>Saccharomycotina</taxon>
        <taxon>Pichiomycetes</taxon>
        <taxon>Debaryomycetaceae</taxon>
        <taxon>Candida/Lodderomyces clade</taxon>
        <taxon>Candida</taxon>
    </lineage>
</organism>